<protein>
    <recommendedName>
        <fullName>Acidic phospholipase A2 1</fullName>
        <shortName>svPLA2</shortName>
        <ecNumber>3.1.1.4</ecNumber>
    </recommendedName>
    <alternativeName>
        <fullName>Phosphatidylcholine 2-acylhydrolase</fullName>
    </alternativeName>
</protein>
<dbReference type="EC" id="3.1.1.4"/>
<dbReference type="EMBL" id="X77088">
    <property type="protein sequence ID" value="CAA54363.1"/>
    <property type="molecule type" value="mRNA"/>
</dbReference>
<dbReference type="PIR" id="S46979">
    <property type="entry name" value="S46979"/>
</dbReference>
<dbReference type="SMR" id="Q91506"/>
<dbReference type="GO" id="GO:0005576">
    <property type="term" value="C:extracellular region"/>
    <property type="evidence" value="ECO:0007669"/>
    <property type="project" value="UniProtKB-SubCell"/>
</dbReference>
<dbReference type="GO" id="GO:0005509">
    <property type="term" value="F:calcium ion binding"/>
    <property type="evidence" value="ECO:0007669"/>
    <property type="project" value="InterPro"/>
</dbReference>
<dbReference type="GO" id="GO:0047498">
    <property type="term" value="F:calcium-dependent phospholipase A2 activity"/>
    <property type="evidence" value="ECO:0007669"/>
    <property type="project" value="TreeGrafter"/>
</dbReference>
<dbReference type="GO" id="GO:0005543">
    <property type="term" value="F:phospholipid binding"/>
    <property type="evidence" value="ECO:0007669"/>
    <property type="project" value="TreeGrafter"/>
</dbReference>
<dbReference type="GO" id="GO:0050482">
    <property type="term" value="P:arachidonate secretion"/>
    <property type="evidence" value="ECO:0007669"/>
    <property type="project" value="InterPro"/>
</dbReference>
<dbReference type="GO" id="GO:0016042">
    <property type="term" value="P:lipid catabolic process"/>
    <property type="evidence" value="ECO:0007669"/>
    <property type="project" value="UniProtKB-KW"/>
</dbReference>
<dbReference type="GO" id="GO:0042130">
    <property type="term" value="P:negative regulation of T cell proliferation"/>
    <property type="evidence" value="ECO:0007669"/>
    <property type="project" value="TreeGrafter"/>
</dbReference>
<dbReference type="GO" id="GO:0006644">
    <property type="term" value="P:phospholipid metabolic process"/>
    <property type="evidence" value="ECO:0007669"/>
    <property type="project" value="InterPro"/>
</dbReference>
<dbReference type="CDD" id="cd00125">
    <property type="entry name" value="PLA2c"/>
    <property type="match status" value="1"/>
</dbReference>
<dbReference type="FunFam" id="1.20.90.10:FF:000001">
    <property type="entry name" value="Basic phospholipase A2 homolog"/>
    <property type="match status" value="1"/>
</dbReference>
<dbReference type="Gene3D" id="1.20.90.10">
    <property type="entry name" value="Phospholipase A2 domain"/>
    <property type="match status" value="1"/>
</dbReference>
<dbReference type="InterPro" id="IPR001211">
    <property type="entry name" value="PLipase_A2"/>
</dbReference>
<dbReference type="InterPro" id="IPR033112">
    <property type="entry name" value="PLipase_A2_Asp_AS"/>
</dbReference>
<dbReference type="InterPro" id="IPR016090">
    <property type="entry name" value="PLipase_A2_dom"/>
</dbReference>
<dbReference type="InterPro" id="IPR036444">
    <property type="entry name" value="PLipase_A2_dom_sf"/>
</dbReference>
<dbReference type="InterPro" id="IPR033113">
    <property type="entry name" value="PLipase_A2_His_AS"/>
</dbReference>
<dbReference type="PANTHER" id="PTHR11716">
    <property type="entry name" value="PHOSPHOLIPASE A2 FAMILY MEMBER"/>
    <property type="match status" value="1"/>
</dbReference>
<dbReference type="PANTHER" id="PTHR11716:SF9">
    <property type="entry name" value="PHOSPHOLIPASE A2, MEMBRANE ASSOCIATED"/>
    <property type="match status" value="1"/>
</dbReference>
<dbReference type="Pfam" id="PF00068">
    <property type="entry name" value="Phospholip_A2_1"/>
    <property type="match status" value="1"/>
</dbReference>
<dbReference type="PRINTS" id="PR00389">
    <property type="entry name" value="PHPHLIPASEA2"/>
</dbReference>
<dbReference type="SMART" id="SM00085">
    <property type="entry name" value="PA2c"/>
    <property type="match status" value="1"/>
</dbReference>
<dbReference type="SUPFAM" id="SSF48619">
    <property type="entry name" value="Phospholipase A2, PLA2"/>
    <property type="match status" value="1"/>
</dbReference>
<dbReference type="PROSITE" id="PS00119">
    <property type="entry name" value="PA2_ASP"/>
    <property type="match status" value="1"/>
</dbReference>
<dbReference type="PROSITE" id="PS00118">
    <property type="entry name" value="PA2_HIS"/>
    <property type="match status" value="1"/>
</dbReference>
<organism>
    <name type="scientific">Protobothrops mucrosquamatus</name>
    <name type="common">Taiwan habu</name>
    <name type="synonym">Trimeresurus mucrosquamatus</name>
    <dbReference type="NCBI Taxonomy" id="103944"/>
    <lineage>
        <taxon>Eukaryota</taxon>
        <taxon>Metazoa</taxon>
        <taxon>Chordata</taxon>
        <taxon>Craniata</taxon>
        <taxon>Vertebrata</taxon>
        <taxon>Euteleostomi</taxon>
        <taxon>Lepidosauria</taxon>
        <taxon>Squamata</taxon>
        <taxon>Bifurcata</taxon>
        <taxon>Unidentata</taxon>
        <taxon>Episquamata</taxon>
        <taxon>Toxicofera</taxon>
        <taxon>Serpentes</taxon>
        <taxon>Colubroidea</taxon>
        <taxon>Viperidae</taxon>
        <taxon>Crotalinae</taxon>
        <taxon>Protobothrops</taxon>
    </lineage>
</organism>
<reference key="1">
    <citation type="submission" date="1994-01" db="EMBL/GenBank/DDBJ databases">
        <title>Cloning and sequencing of an phospholipase A2 from Taiwan habu.</title>
        <authorList>
            <person name="Tsai I.-H."/>
        </authorList>
    </citation>
    <scope>NUCLEOTIDE SEQUENCE [MRNA]</scope>
    <source>
        <tissue>Venom gland</tissue>
    </source>
</reference>
<accession>Q91506</accession>
<feature type="chain" id="PRO_0000161705" description="Acidic phospholipase A2 1">
    <location>
        <begin position="1"/>
        <end position="122"/>
    </location>
</feature>
<feature type="active site" evidence="1">
    <location>
        <position position="47"/>
    </location>
</feature>
<feature type="active site" evidence="1">
    <location>
        <position position="88"/>
    </location>
</feature>
<feature type="binding site" evidence="1">
    <location>
        <position position="27"/>
    </location>
    <ligand>
        <name>Ca(2+)</name>
        <dbReference type="ChEBI" id="CHEBI:29108"/>
    </ligand>
</feature>
<feature type="binding site" evidence="1">
    <location>
        <position position="29"/>
    </location>
    <ligand>
        <name>Ca(2+)</name>
        <dbReference type="ChEBI" id="CHEBI:29108"/>
    </ligand>
</feature>
<feature type="binding site" evidence="1">
    <location>
        <position position="31"/>
    </location>
    <ligand>
        <name>Ca(2+)</name>
        <dbReference type="ChEBI" id="CHEBI:29108"/>
    </ligand>
</feature>
<feature type="binding site" evidence="1">
    <location>
        <position position="48"/>
    </location>
    <ligand>
        <name>Ca(2+)</name>
        <dbReference type="ChEBI" id="CHEBI:29108"/>
    </ligand>
</feature>
<feature type="disulfide bond" evidence="1">
    <location>
        <begin position="26"/>
        <end position="115"/>
    </location>
</feature>
<feature type="disulfide bond" evidence="1">
    <location>
        <begin position="28"/>
        <end position="44"/>
    </location>
</feature>
<feature type="disulfide bond" evidence="1">
    <location>
        <begin position="43"/>
        <end position="94"/>
    </location>
</feature>
<feature type="disulfide bond" evidence="1">
    <location>
        <begin position="49"/>
        <end position="122"/>
    </location>
</feature>
<feature type="disulfide bond" evidence="1">
    <location>
        <begin position="50"/>
        <end position="87"/>
    </location>
</feature>
<feature type="disulfide bond" evidence="1">
    <location>
        <begin position="57"/>
        <end position="81"/>
    </location>
</feature>
<feature type="disulfide bond" evidence="1">
    <location>
        <begin position="75"/>
        <end position="85"/>
    </location>
</feature>
<comment type="function">
    <text evidence="1">PLA2 catalyzes the calcium-dependent hydrolysis of the 2-acyl groups in 3-sn-phosphoglycerides.</text>
</comment>
<comment type="catalytic activity">
    <reaction evidence="2 3">
        <text>a 1,2-diacyl-sn-glycero-3-phosphocholine + H2O = a 1-acyl-sn-glycero-3-phosphocholine + a fatty acid + H(+)</text>
        <dbReference type="Rhea" id="RHEA:15801"/>
        <dbReference type="ChEBI" id="CHEBI:15377"/>
        <dbReference type="ChEBI" id="CHEBI:15378"/>
        <dbReference type="ChEBI" id="CHEBI:28868"/>
        <dbReference type="ChEBI" id="CHEBI:57643"/>
        <dbReference type="ChEBI" id="CHEBI:58168"/>
        <dbReference type="EC" id="3.1.1.4"/>
    </reaction>
</comment>
<comment type="cofactor">
    <cofactor evidence="1">
        <name>Ca(2+)</name>
        <dbReference type="ChEBI" id="CHEBI:29108"/>
    </cofactor>
    <text evidence="1">Binds 1 Ca(2+) ion per subunit.</text>
</comment>
<comment type="subunit">
    <text evidence="1">Homodimer.</text>
</comment>
<comment type="subcellular location">
    <subcellularLocation>
        <location evidence="1">Secreted</location>
    </subcellularLocation>
</comment>
<comment type="tissue specificity">
    <text>Expressed by the venom gland.</text>
</comment>
<comment type="similarity">
    <text evidence="4">Belongs to the phospholipase A2 family. Group II subfamily. D49 sub-subfamily.</text>
</comment>
<evidence type="ECO:0000250" key="1"/>
<evidence type="ECO:0000255" key="2">
    <source>
        <dbReference type="PROSITE-ProRule" id="PRU10035"/>
    </source>
</evidence>
<evidence type="ECO:0000255" key="3">
    <source>
        <dbReference type="PROSITE-ProRule" id="PRU10036"/>
    </source>
</evidence>
<evidence type="ECO:0000305" key="4"/>
<sequence>NLWQFENMIMKVAKKSGILSYSAYGCYCGWGGRGTPKDATDRCCFVHDCCYGKVTGCNPKLGKYTYSSENGDIICGGDGPCKEVCECDRAAAICFRDNLDTYDRKTYWKYPASNCQEDSEPC</sequence>
<keyword id="KW-0106">Calcium</keyword>
<keyword id="KW-1015">Disulfide bond</keyword>
<keyword id="KW-0378">Hydrolase</keyword>
<keyword id="KW-0442">Lipid degradation</keyword>
<keyword id="KW-0443">Lipid metabolism</keyword>
<keyword id="KW-0479">Metal-binding</keyword>
<keyword id="KW-0964">Secreted</keyword>
<proteinExistence type="evidence at transcript level"/>
<name>PA2A1_PROMU</name>